<evidence type="ECO:0000250" key="1">
    <source>
        <dbReference type="UniProtKB" id="P02893"/>
    </source>
</evidence>
<evidence type="ECO:0000250" key="2">
    <source>
        <dbReference type="UniProtKB" id="P19597"/>
    </source>
</evidence>
<evidence type="ECO:0000250" key="3">
    <source>
        <dbReference type="UniProtKB" id="P23093"/>
    </source>
</evidence>
<evidence type="ECO:0000250" key="4">
    <source>
        <dbReference type="UniProtKB" id="Q7K740"/>
    </source>
</evidence>
<evidence type="ECO:0000255" key="5"/>
<evidence type="ECO:0000255" key="6">
    <source>
        <dbReference type="PROSITE-ProRule" id="PRU00210"/>
    </source>
</evidence>
<evidence type="ECO:0000256" key="7">
    <source>
        <dbReference type="SAM" id="MobiDB-lite"/>
    </source>
</evidence>
<evidence type="ECO:0000269" key="8">
    <source>
    </source>
</evidence>
<evidence type="ECO:0000303" key="9">
    <source>
    </source>
</evidence>
<evidence type="ECO:0000305" key="10"/>
<evidence type="ECO:0000305" key="11">
    <source>
    </source>
</evidence>
<proteinExistence type="inferred from homology"/>
<sequence length="351" mass="34782">MKNFILLAVSSILLVDLLPTHFEHNVDLSRAINVNGVSFNNVDTSSLGAAQVRQSASRGRGLGEKPKEGADKEKKKEKEKEKEEEPKKPNENKLKQPEQPAAGAGGEQPAAGAGGEQPAAGAGGEQPAAGARGEQPAAGAGGEQPAAGAGGEQPAAGAGGEQPAAGAGGEQPAAGAGGEQPAAGARGEQPAAGAGGEQPAAGAGGEQPAAGARGEQPAAGAGGEQPAPAPRREQPAPGAVAGDGARGGNAGAGKGQGQNNQGANVPNEKVVNDYLHKIRSSVTTEWTPCSVTCGNGVRIRRKGHAGNKKAEDLTMDDLEVEACVMDKCAGIFNVVSNSLGLVILLVLALFN</sequence>
<gene>
    <name evidence="3" type="primary">CSP</name>
</gene>
<feature type="signal peptide" evidence="5">
    <location>
        <begin position="1"/>
        <end position="22"/>
    </location>
</feature>
<feature type="chain" id="PRO_0000455496" description="Circumsporozoite protein" evidence="5">
    <location>
        <begin position="23"/>
        <end position="328"/>
    </location>
</feature>
<feature type="chain" id="PRO_0000455497" description="Circumsporozoite protein C-terminus" evidence="3">
    <location>
        <begin status="unknown"/>
        <end position="328"/>
    </location>
</feature>
<feature type="propeptide" id="PRO_0000455498" description="Removed in mature form" evidence="5">
    <location>
        <begin position="329"/>
        <end position="351"/>
    </location>
</feature>
<feature type="repeat" description="1" evidence="11">
    <location>
        <begin position="101"/>
        <end position="109"/>
    </location>
</feature>
<feature type="repeat" description="2" evidence="11">
    <location>
        <begin position="110"/>
        <end position="118"/>
    </location>
</feature>
<feature type="repeat" description="3" evidence="11">
    <location>
        <begin position="119"/>
        <end position="127"/>
    </location>
</feature>
<feature type="repeat" description="4" evidence="11">
    <location>
        <begin position="128"/>
        <end position="136"/>
    </location>
</feature>
<feature type="repeat" description="5" evidence="11">
    <location>
        <begin position="137"/>
        <end position="145"/>
    </location>
</feature>
<feature type="repeat" description="6" evidence="11">
    <location>
        <begin position="146"/>
        <end position="154"/>
    </location>
</feature>
<feature type="repeat" description="7" evidence="11">
    <location>
        <begin position="155"/>
        <end position="163"/>
    </location>
</feature>
<feature type="repeat" description="8" evidence="11">
    <location>
        <begin position="164"/>
        <end position="172"/>
    </location>
</feature>
<feature type="repeat" description="9" evidence="11">
    <location>
        <begin position="173"/>
        <end position="181"/>
    </location>
</feature>
<feature type="repeat" description="10" evidence="11">
    <location>
        <begin position="182"/>
        <end position="190"/>
    </location>
</feature>
<feature type="repeat" description="11" evidence="11">
    <location>
        <begin position="191"/>
        <end position="199"/>
    </location>
</feature>
<feature type="repeat" description="12" evidence="11">
    <location>
        <begin position="200"/>
        <end position="208"/>
    </location>
</feature>
<feature type="repeat" description="13" evidence="11">
    <location>
        <begin position="209"/>
        <end position="217"/>
    </location>
</feature>
<feature type="repeat" description="14" evidence="11">
    <location>
        <begin position="218"/>
        <end position="226"/>
    </location>
</feature>
<feature type="domain" description="TSP type-1" evidence="6">
    <location>
        <begin position="277"/>
        <end position="329"/>
    </location>
</feature>
<feature type="region of interest" description="Disordered" evidence="7">
    <location>
        <begin position="50"/>
        <end position="266"/>
    </location>
</feature>
<feature type="region of interest" description="Required for the binding to heparan sulfate proteoglycans (HSPGs) on the surface of host hepatocytes" evidence="4">
    <location>
        <begin position="80"/>
        <end position="88"/>
    </location>
</feature>
<feature type="region of interest" description="Region I; contains the proteolytic cleavage site" evidence="3">
    <location>
        <begin position="93"/>
        <end position="97"/>
    </location>
</feature>
<feature type="region of interest" description="14 X 9 AA tandem repeats of A-A-G-A-[GR]-G-E-Q-P" evidence="11">
    <location>
        <begin position="101"/>
        <end position="226"/>
    </location>
</feature>
<feature type="compositionally biased region" description="Basic and acidic residues" evidence="7">
    <location>
        <begin position="61"/>
        <end position="96"/>
    </location>
</feature>
<feature type="compositionally biased region" description="Low complexity" evidence="7">
    <location>
        <begin position="97"/>
        <end position="219"/>
    </location>
</feature>
<feature type="compositionally biased region" description="Gly residues" evidence="7">
    <location>
        <begin position="244"/>
        <end position="256"/>
    </location>
</feature>
<feature type="lipid moiety-binding region" description="GPI-anchor amidated cysteine" evidence="5">
    <location>
        <position position="328"/>
    </location>
</feature>
<feature type="glycosylation site" description="O-linked (Fuc) threonine" evidence="2">
    <location>
        <position position="292"/>
    </location>
</feature>
<feature type="disulfide bond" evidence="4">
    <location>
        <begin position="289"/>
        <end position="323"/>
    </location>
</feature>
<feature type="disulfide bond" evidence="4">
    <location>
        <begin position="293"/>
        <end position="328"/>
    </location>
</feature>
<keyword id="KW-1003">Cell membrane</keyword>
<keyword id="KW-0963">Cytoplasm</keyword>
<keyword id="KW-1015">Disulfide bond</keyword>
<keyword id="KW-0325">Glycoprotein</keyword>
<keyword id="KW-0336">GPI-anchor</keyword>
<keyword id="KW-0449">Lipoprotein</keyword>
<keyword id="KW-0461">Malaria</keyword>
<keyword id="KW-0472">Membrane</keyword>
<keyword id="KW-0677">Repeat</keyword>
<keyword id="KW-0732">Signal</keyword>
<keyword id="KW-0748">Sporozoite</keyword>
<organism>
    <name type="scientific">Plasmodium knowlesi (strain nuri)</name>
    <dbReference type="NCBI Taxonomy" id="5852"/>
    <lineage>
        <taxon>Eukaryota</taxon>
        <taxon>Sar</taxon>
        <taxon>Alveolata</taxon>
        <taxon>Apicomplexa</taxon>
        <taxon>Aconoidasida</taxon>
        <taxon>Haemosporida</taxon>
        <taxon>Plasmodiidae</taxon>
        <taxon>Plasmodium</taxon>
        <taxon>Plasmodium (Plasmodium)</taxon>
    </lineage>
</organism>
<dbReference type="EMBL" id="M11031">
    <property type="protein sequence ID" value="AAA29540.1"/>
    <property type="molecule type" value="Genomic_DNA"/>
</dbReference>
<dbReference type="PIR" id="A26253">
    <property type="entry name" value="OZZQKU"/>
</dbReference>
<dbReference type="SMR" id="P04922"/>
<dbReference type="GlyCosmos" id="P04922">
    <property type="glycosylation" value="1 site, No reported glycans"/>
</dbReference>
<dbReference type="GO" id="GO:0009986">
    <property type="term" value="C:cell surface"/>
    <property type="evidence" value="ECO:0007669"/>
    <property type="project" value="InterPro"/>
</dbReference>
<dbReference type="GO" id="GO:0005737">
    <property type="term" value="C:cytoplasm"/>
    <property type="evidence" value="ECO:0007669"/>
    <property type="project" value="UniProtKB-SubCell"/>
</dbReference>
<dbReference type="GO" id="GO:0005886">
    <property type="term" value="C:plasma membrane"/>
    <property type="evidence" value="ECO:0007669"/>
    <property type="project" value="UniProtKB-SubCell"/>
</dbReference>
<dbReference type="GO" id="GO:0098552">
    <property type="term" value="C:side of membrane"/>
    <property type="evidence" value="ECO:0007669"/>
    <property type="project" value="UniProtKB-KW"/>
</dbReference>
<dbReference type="Gene3D" id="2.20.100.10">
    <property type="entry name" value="Thrombospondin type-1 (TSP1) repeat"/>
    <property type="match status" value="1"/>
</dbReference>
<dbReference type="InterPro" id="IPR003067">
    <property type="entry name" value="Crcmsprzoite"/>
</dbReference>
<dbReference type="InterPro" id="IPR000884">
    <property type="entry name" value="TSP1_rpt"/>
</dbReference>
<dbReference type="InterPro" id="IPR036383">
    <property type="entry name" value="TSP1_rpt_sf"/>
</dbReference>
<dbReference type="Pfam" id="PF00090">
    <property type="entry name" value="TSP_1"/>
    <property type="match status" value="1"/>
</dbReference>
<dbReference type="PRINTS" id="PR01303">
    <property type="entry name" value="CRCMSPRZOITE"/>
</dbReference>
<dbReference type="SMART" id="SM00209">
    <property type="entry name" value="TSP1"/>
    <property type="match status" value="1"/>
</dbReference>
<dbReference type="SUPFAM" id="SSF82895">
    <property type="entry name" value="TSP-1 type 1 repeat"/>
    <property type="match status" value="1"/>
</dbReference>
<dbReference type="PROSITE" id="PS50092">
    <property type="entry name" value="TSP1"/>
    <property type="match status" value="1"/>
</dbReference>
<comment type="function">
    <text evidence="1 3">Essential sporozoite protein (By similarity). In the mosquito vector, required for sporozoite development in the oocyst, migration through the vector hemolymph and entry into the vector salivary glands (By similarity). In the vertebrate host, required for sporozoite migration through the host dermis and infection of host hepatocytes (By similarity). Binds to highly sulfated heparan sulfate proteoglycans (HSPGs) on the surface of host hepatocytes (By similarity).</text>
</comment>
<comment type="function">
    <molecule>Circumsporozoite protein C-terminus</molecule>
    <text evidence="3">In the vertebrate host, binds to highly sulfated heparan sulfate proteoglycans (HSPGs) on the surface of host hepatocytes and is required for sporozoite invasion of the host hepatocytes.</text>
</comment>
<comment type="subcellular location">
    <subcellularLocation>
        <location evidence="2">Cell membrane</location>
        <topology evidence="5">Lipid-anchor</topology>
        <topology evidence="5">GPI-anchor</topology>
    </subcellularLocation>
    <subcellularLocation>
        <location evidence="3">Cytoplasm</location>
    </subcellularLocation>
    <text evidence="3">Localizes to the cytoplasm and the cell membrane in oocysts at day 6 post infection and then gradually distributes over the entire cell surface of the sporoblast and the budding sporozoites.</text>
</comment>
<comment type="domain">
    <text evidence="3 4">The N-terminus is involved in the initial binding to heparan sulfate proteoglycans (HSPGs) on the surface of host hepatocytes (By similarity). The N-terminus masks the TSP type-1 (TSR) domain which maintains the sporozoites in a migratory state, enabling them to complete their journey to the salivary gland in the mosquito vector and then to the host liver. The unmasking of the TSP type-1 (TSR) domain when the sporozoite interacts with the host hepatocyte also protects sporozoites from host antibodies (By similarity).</text>
</comment>
<comment type="domain">
    <text evidence="3">The TSP type-1 (TSR) domain is required for sporozoite development and invasion. CSP has two conformational states, an adhesive conformation in which the TSP type-1 (TSR) domain is exposed and a nonadhesive conformation in which the TSR is masked by the N-terminus. TSR-exposed conformation occurs during sporozoite development in the oocyst in the mosquito vector and during host hepatocyte invasion. TSR-masked conformation occurs during sporozoite migration through the hemolymph to salivary glands in the mosquito vector and in the host dermis.</text>
</comment>
<comment type="domain">
    <text evidence="3">The GPI-anchor is essential for cell membrane localization and for sporozoite formation inside the oocyst.</text>
</comment>
<comment type="PTM">
    <text evidence="1 3">During host cell invasion, proteolytically cleaved at the cell membrane in the region I by a papain-like cysteine protease of parasite origin (By similarity). Cleavage is triggered by the sporozoite contact with highly sulfated heparan sulfate proteoglycans (HSPGs) present on the host hepatocyte cell surface (By similarity). Cleavage exposes the TSP type-1 (TSR) domain and is required for productive invasion of host hepatocytes but not for adhesion to the host cell membrane (By similarity). Cleavage is dispensable for sporozoite development in the oocyst, motility and for traversal of host and vector cells (By similarity).</text>
</comment>
<comment type="PTM">
    <text evidence="2">O-glycosylated; maybe by POFUT2.</text>
</comment>
<comment type="polymorphism">
    <text evidence="8">The sequence of the repeats varies across Plasmodium species and strains.</text>
</comment>
<comment type="similarity">
    <text evidence="10">Belongs to the plasmodium circumsporozoite protein family.</text>
</comment>
<name>CSP_PLAKU</name>
<protein>
    <recommendedName>
        <fullName evidence="9">Circumsporozoite protein</fullName>
        <shortName evidence="9">CS</shortName>
    </recommendedName>
    <component>
        <recommendedName>
            <fullName evidence="10">Circumsporozoite protein C-terminus</fullName>
        </recommendedName>
    </component>
</protein>
<accession>P04922</accession>
<reference key="1">
    <citation type="journal article" date="1985" name="Science">
        <title>Diversity of circumsporozoite antigen genes from two strains of the malarial parasite Plasmodium knowlesi.</title>
        <authorList>
            <person name="Sharma S."/>
            <person name="Svec P."/>
            <person name="Mitchell G.H."/>
            <person name="Godson G.N."/>
        </authorList>
    </citation>
    <scope>NUCLEOTIDE SEQUENCE [GENOMIC DNA]</scope>
    <scope>POLYMORPHISM</scope>
    <scope>REPEATS</scope>
</reference>